<dbReference type="EMBL" id="CR936503">
    <property type="protein sequence ID" value="CAI54698.1"/>
    <property type="molecule type" value="Genomic_DNA"/>
</dbReference>
<dbReference type="RefSeq" id="WP_011374106.1">
    <property type="nucleotide sequence ID" value="NC_007576.1"/>
</dbReference>
<dbReference type="SMR" id="Q38YM9"/>
<dbReference type="STRING" id="314315.LCA_0397"/>
<dbReference type="GeneID" id="57133227"/>
<dbReference type="KEGG" id="lsa:LCA_0397"/>
<dbReference type="eggNOG" id="COG0236">
    <property type="taxonomic scope" value="Bacteria"/>
</dbReference>
<dbReference type="HOGENOM" id="CLU_108696_19_0_9"/>
<dbReference type="OrthoDB" id="6462171at2"/>
<dbReference type="UniPathway" id="UPA00556"/>
<dbReference type="Proteomes" id="UP000002707">
    <property type="component" value="Chromosome"/>
</dbReference>
<dbReference type="GO" id="GO:0005737">
    <property type="term" value="C:cytoplasm"/>
    <property type="evidence" value="ECO:0007669"/>
    <property type="project" value="UniProtKB-SubCell"/>
</dbReference>
<dbReference type="GO" id="GO:0036370">
    <property type="term" value="F:D-alanyl carrier activity"/>
    <property type="evidence" value="ECO:0007669"/>
    <property type="project" value="UniProtKB-UniRule"/>
</dbReference>
<dbReference type="GO" id="GO:0071555">
    <property type="term" value="P:cell wall organization"/>
    <property type="evidence" value="ECO:0007669"/>
    <property type="project" value="UniProtKB-KW"/>
</dbReference>
<dbReference type="GO" id="GO:0070395">
    <property type="term" value="P:lipoteichoic acid biosynthetic process"/>
    <property type="evidence" value="ECO:0007669"/>
    <property type="project" value="UniProtKB-UniRule"/>
</dbReference>
<dbReference type="Gene3D" id="1.10.1200.10">
    <property type="entry name" value="ACP-like"/>
    <property type="match status" value="1"/>
</dbReference>
<dbReference type="HAMAP" id="MF_00565">
    <property type="entry name" value="DltC"/>
    <property type="match status" value="1"/>
</dbReference>
<dbReference type="InterPro" id="IPR036736">
    <property type="entry name" value="ACP-like_sf"/>
</dbReference>
<dbReference type="InterPro" id="IPR003230">
    <property type="entry name" value="DltC"/>
</dbReference>
<dbReference type="InterPro" id="IPR009081">
    <property type="entry name" value="PP-bd_ACP"/>
</dbReference>
<dbReference type="NCBIfam" id="TIGR01688">
    <property type="entry name" value="dltC"/>
    <property type="match status" value="1"/>
</dbReference>
<dbReference type="NCBIfam" id="NF003464">
    <property type="entry name" value="PRK05087.1"/>
    <property type="match status" value="1"/>
</dbReference>
<dbReference type="Pfam" id="PF00550">
    <property type="entry name" value="PP-binding"/>
    <property type="match status" value="1"/>
</dbReference>
<dbReference type="SUPFAM" id="SSF47336">
    <property type="entry name" value="ACP-like"/>
    <property type="match status" value="1"/>
</dbReference>
<dbReference type="PROSITE" id="PS50075">
    <property type="entry name" value="CARRIER"/>
    <property type="match status" value="1"/>
</dbReference>
<proteinExistence type="inferred from homology"/>
<comment type="function">
    <text evidence="1">Carrier protein involved in the D-alanylation of lipoteichoic acid (LTA). The loading of thioester-linked D-alanine onto DltC is catalyzed by D-alanine--D-alanyl carrier protein ligase DltA. The DltC-carried D-alanyl group is further transferred to cell membrane phosphatidylglycerol (PG) by forming an ester bond, probably catalyzed by DltD. D-alanylation of LTA plays an important role in modulating the properties of the cell wall in Gram-positive bacteria, influencing the net charge of the cell wall.</text>
</comment>
<comment type="pathway">
    <text evidence="1">Cell wall biogenesis; lipoteichoic acid biosynthesis.</text>
</comment>
<comment type="subcellular location">
    <subcellularLocation>
        <location evidence="1">Cytoplasm</location>
    </subcellularLocation>
</comment>
<comment type="PTM">
    <text evidence="1">4'-phosphopantetheine is transferred from CoA to a specific serine of apo-DCP.</text>
</comment>
<comment type="similarity">
    <text evidence="1">Belongs to the DltC family.</text>
</comment>
<name>DLTC_LATSS</name>
<evidence type="ECO:0000255" key="1">
    <source>
        <dbReference type="HAMAP-Rule" id="MF_00565"/>
    </source>
</evidence>
<keyword id="KW-0961">Cell wall biogenesis/degradation</keyword>
<keyword id="KW-0963">Cytoplasm</keyword>
<keyword id="KW-0596">Phosphopantetheine</keyword>
<keyword id="KW-0597">Phosphoprotein</keyword>
<keyword id="KW-1185">Reference proteome</keyword>
<reference key="1">
    <citation type="journal article" date="2005" name="Nat. Biotechnol.">
        <title>The complete genome sequence of the meat-borne lactic acid bacterium Lactobacillus sakei 23K.</title>
        <authorList>
            <person name="Chaillou S."/>
            <person name="Champomier-Verges M.-C."/>
            <person name="Cornet M."/>
            <person name="Crutz-Le Coq A.-M."/>
            <person name="Dudez A.-M."/>
            <person name="Martin V."/>
            <person name="Beaufils S."/>
            <person name="Darbon-Rongere E."/>
            <person name="Bossy R."/>
            <person name="Loux V."/>
            <person name="Zagorec M."/>
        </authorList>
    </citation>
    <scope>NUCLEOTIDE SEQUENCE [LARGE SCALE GENOMIC DNA]</scope>
    <source>
        <strain>23K</strain>
    </source>
</reference>
<gene>
    <name evidence="1" type="primary">dltC</name>
    <name type="ordered locus">LCA_0397</name>
</gene>
<sequence length="78" mass="8740">MDVENTVVEILADLTGNDDIKDDMDMDLFETGTLDSMATVQLLLELQGQLDIDVPVSEFDRNEWATPNKIIAKAKELQ</sequence>
<accession>Q38YM9</accession>
<protein>
    <recommendedName>
        <fullName evidence="1">D-alanyl carrier protein</fullName>
        <shortName evidence="1">DCP</shortName>
    </recommendedName>
    <alternativeName>
        <fullName evidence="1">D-alanine--poly(phosphoribitol) ligase subunit 2</fullName>
    </alternativeName>
</protein>
<organism>
    <name type="scientific">Latilactobacillus sakei subsp. sakei (strain 23K)</name>
    <name type="common">Lactobacillus sakei subsp. sakei</name>
    <dbReference type="NCBI Taxonomy" id="314315"/>
    <lineage>
        <taxon>Bacteria</taxon>
        <taxon>Bacillati</taxon>
        <taxon>Bacillota</taxon>
        <taxon>Bacilli</taxon>
        <taxon>Lactobacillales</taxon>
        <taxon>Lactobacillaceae</taxon>
        <taxon>Latilactobacillus</taxon>
    </lineage>
</organism>
<feature type="chain" id="PRO_1000024920" description="D-alanyl carrier protein">
    <location>
        <begin position="1"/>
        <end position="78"/>
    </location>
</feature>
<feature type="domain" description="Carrier" evidence="1">
    <location>
        <begin position="1"/>
        <end position="78"/>
    </location>
</feature>
<feature type="modified residue" description="O-(pantetheine 4'-phosphoryl)serine" evidence="1">
    <location>
        <position position="36"/>
    </location>
</feature>